<comment type="function">
    <text evidence="1">Catalyzes the conversion of urocanate to 4-imidazolone-5-propionate.</text>
</comment>
<comment type="catalytic activity">
    <reaction evidence="1">
        <text>4-imidazolone-5-propanoate = trans-urocanate + H2O</text>
        <dbReference type="Rhea" id="RHEA:13101"/>
        <dbReference type="ChEBI" id="CHEBI:15377"/>
        <dbReference type="ChEBI" id="CHEBI:17771"/>
        <dbReference type="ChEBI" id="CHEBI:77893"/>
        <dbReference type="EC" id="4.2.1.49"/>
    </reaction>
</comment>
<comment type="cofactor">
    <cofactor evidence="1">
        <name>NAD(+)</name>
        <dbReference type="ChEBI" id="CHEBI:57540"/>
    </cofactor>
    <text evidence="1">Binds 1 NAD(+) per subunit.</text>
</comment>
<comment type="pathway">
    <text evidence="1">Amino-acid degradation; L-histidine degradation into L-glutamate; N-formimidoyl-L-glutamate from L-histidine: step 2/3.</text>
</comment>
<comment type="subcellular location">
    <subcellularLocation>
        <location evidence="1">Cytoplasm</location>
    </subcellularLocation>
</comment>
<comment type="similarity">
    <text evidence="1">Belongs to the urocanase family.</text>
</comment>
<accession>B8II06</accession>
<organism>
    <name type="scientific">Methylobacterium nodulans (strain LMG 21967 / CNCM I-2342 / ORS 2060)</name>
    <dbReference type="NCBI Taxonomy" id="460265"/>
    <lineage>
        <taxon>Bacteria</taxon>
        <taxon>Pseudomonadati</taxon>
        <taxon>Pseudomonadota</taxon>
        <taxon>Alphaproteobacteria</taxon>
        <taxon>Hyphomicrobiales</taxon>
        <taxon>Methylobacteriaceae</taxon>
        <taxon>Methylobacterium</taxon>
    </lineage>
</organism>
<dbReference type="EC" id="4.2.1.49" evidence="1"/>
<dbReference type="EMBL" id="CP001349">
    <property type="protein sequence ID" value="ACL56044.1"/>
    <property type="molecule type" value="Genomic_DNA"/>
</dbReference>
<dbReference type="RefSeq" id="WP_015927742.1">
    <property type="nucleotide sequence ID" value="NC_011894.1"/>
</dbReference>
<dbReference type="SMR" id="B8II06"/>
<dbReference type="STRING" id="460265.Mnod_1036"/>
<dbReference type="KEGG" id="mno:Mnod_1036"/>
<dbReference type="eggNOG" id="COG2987">
    <property type="taxonomic scope" value="Bacteria"/>
</dbReference>
<dbReference type="HOGENOM" id="CLU_018868_0_1_5"/>
<dbReference type="OrthoDB" id="9764874at2"/>
<dbReference type="UniPathway" id="UPA00379">
    <property type="reaction ID" value="UER00550"/>
</dbReference>
<dbReference type="Proteomes" id="UP000008207">
    <property type="component" value="Chromosome"/>
</dbReference>
<dbReference type="GO" id="GO:0005737">
    <property type="term" value="C:cytoplasm"/>
    <property type="evidence" value="ECO:0007669"/>
    <property type="project" value="UniProtKB-SubCell"/>
</dbReference>
<dbReference type="GO" id="GO:0016153">
    <property type="term" value="F:urocanate hydratase activity"/>
    <property type="evidence" value="ECO:0007669"/>
    <property type="project" value="UniProtKB-UniRule"/>
</dbReference>
<dbReference type="GO" id="GO:0019556">
    <property type="term" value="P:L-histidine catabolic process to glutamate and formamide"/>
    <property type="evidence" value="ECO:0007669"/>
    <property type="project" value="UniProtKB-UniPathway"/>
</dbReference>
<dbReference type="GO" id="GO:0019557">
    <property type="term" value="P:L-histidine catabolic process to glutamate and formate"/>
    <property type="evidence" value="ECO:0007669"/>
    <property type="project" value="UniProtKB-UniPathway"/>
</dbReference>
<dbReference type="FunFam" id="3.40.50.10730:FF:000001">
    <property type="entry name" value="Urocanate hydratase"/>
    <property type="match status" value="1"/>
</dbReference>
<dbReference type="Gene3D" id="3.40.50.10730">
    <property type="entry name" value="Urocanase like domains"/>
    <property type="match status" value="1"/>
</dbReference>
<dbReference type="Gene3D" id="3.40.1770.10">
    <property type="entry name" value="Urocanase superfamily"/>
    <property type="match status" value="1"/>
</dbReference>
<dbReference type="HAMAP" id="MF_00577">
    <property type="entry name" value="HutU"/>
    <property type="match status" value="1"/>
</dbReference>
<dbReference type="InterPro" id="IPR055351">
    <property type="entry name" value="Urocanase"/>
</dbReference>
<dbReference type="InterPro" id="IPR023637">
    <property type="entry name" value="Urocanase-like"/>
</dbReference>
<dbReference type="InterPro" id="IPR035401">
    <property type="entry name" value="Urocanase_C"/>
</dbReference>
<dbReference type="InterPro" id="IPR038364">
    <property type="entry name" value="Urocanase_central_sf"/>
</dbReference>
<dbReference type="InterPro" id="IPR023636">
    <property type="entry name" value="Urocanase_CS"/>
</dbReference>
<dbReference type="InterPro" id="IPR035400">
    <property type="entry name" value="Urocanase_N"/>
</dbReference>
<dbReference type="InterPro" id="IPR035085">
    <property type="entry name" value="Urocanase_Rossmann-like"/>
</dbReference>
<dbReference type="InterPro" id="IPR036190">
    <property type="entry name" value="Urocanase_sf"/>
</dbReference>
<dbReference type="NCBIfam" id="TIGR01228">
    <property type="entry name" value="hutU"/>
    <property type="match status" value="1"/>
</dbReference>
<dbReference type="NCBIfam" id="NF003820">
    <property type="entry name" value="PRK05414.1"/>
    <property type="match status" value="1"/>
</dbReference>
<dbReference type="PANTHER" id="PTHR12216">
    <property type="entry name" value="UROCANATE HYDRATASE"/>
    <property type="match status" value="1"/>
</dbReference>
<dbReference type="PANTHER" id="PTHR12216:SF4">
    <property type="entry name" value="UROCANATE HYDRATASE"/>
    <property type="match status" value="1"/>
</dbReference>
<dbReference type="Pfam" id="PF01175">
    <property type="entry name" value="Urocanase"/>
    <property type="match status" value="1"/>
</dbReference>
<dbReference type="Pfam" id="PF17392">
    <property type="entry name" value="Urocanase_C"/>
    <property type="match status" value="1"/>
</dbReference>
<dbReference type="Pfam" id="PF17391">
    <property type="entry name" value="Urocanase_N"/>
    <property type="match status" value="1"/>
</dbReference>
<dbReference type="PIRSF" id="PIRSF001423">
    <property type="entry name" value="Urocanate_hydrat"/>
    <property type="match status" value="1"/>
</dbReference>
<dbReference type="SUPFAM" id="SSF111326">
    <property type="entry name" value="Urocanase"/>
    <property type="match status" value="1"/>
</dbReference>
<dbReference type="PROSITE" id="PS01233">
    <property type="entry name" value="UROCANASE"/>
    <property type="match status" value="1"/>
</dbReference>
<feature type="chain" id="PRO_1000199900" description="Urocanate hydratase">
    <location>
        <begin position="1"/>
        <end position="554"/>
    </location>
</feature>
<feature type="active site" evidence="1">
    <location>
        <position position="409"/>
    </location>
</feature>
<feature type="binding site" evidence="1">
    <location>
        <begin position="51"/>
        <end position="52"/>
    </location>
    <ligand>
        <name>NAD(+)</name>
        <dbReference type="ChEBI" id="CHEBI:57540"/>
    </ligand>
</feature>
<feature type="binding site" evidence="1">
    <location>
        <position position="129"/>
    </location>
    <ligand>
        <name>NAD(+)</name>
        <dbReference type="ChEBI" id="CHEBI:57540"/>
    </ligand>
</feature>
<feature type="binding site" evidence="1">
    <location>
        <begin position="175"/>
        <end position="177"/>
    </location>
    <ligand>
        <name>NAD(+)</name>
        <dbReference type="ChEBI" id="CHEBI:57540"/>
    </ligand>
</feature>
<feature type="binding site" evidence="1">
    <location>
        <position position="195"/>
    </location>
    <ligand>
        <name>NAD(+)</name>
        <dbReference type="ChEBI" id="CHEBI:57540"/>
    </ligand>
</feature>
<feature type="binding site" evidence="1">
    <location>
        <begin position="241"/>
        <end position="242"/>
    </location>
    <ligand>
        <name>NAD(+)</name>
        <dbReference type="ChEBI" id="CHEBI:57540"/>
    </ligand>
</feature>
<feature type="binding site" evidence="1">
    <location>
        <begin position="262"/>
        <end position="266"/>
    </location>
    <ligand>
        <name>NAD(+)</name>
        <dbReference type="ChEBI" id="CHEBI:57540"/>
    </ligand>
</feature>
<feature type="binding site" evidence="1">
    <location>
        <begin position="272"/>
        <end position="273"/>
    </location>
    <ligand>
        <name>NAD(+)</name>
        <dbReference type="ChEBI" id="CHEBI:57540"/>
    </ligand>
</feature>
<feature type="binding site" evidence="1">
    <location>
        <position position="321"/>
    </location>
    <ligand>
        <name>NAD(+)</name>
        <dbReference type="ChEBI" id="CHEBI:57540"/>
    </ligand>
</feature>
<feature type="binding site" evidence="1">
    <location>
        <position position="491"/>
    </location>
    <ligand>
        <name>NAD(+)</name>
        <dbReference type="ChEBI" id="CHEBI:57540"/>
    </ligand>
</feature>
<name>HUTU_METNO</name>
<sequence length="554" mass="60301">MTRLDNARIVRAPRGPALTAKSWLTEAPLRMLMNNLDPDVAERPGDLVVYGGIGRAARDWASFDRIVAALKDLDEDQTLLVQSGKPVGIFRTHPDAPRVLIANSNLVPHWATWAHFHELDRKGLMMYGQMTAGSWIYIGSQGIVQGTYETFVEMGRQHYGGDLAGRWILTAGLGGMGGAQPLAATMAGASCLAVECRASSIEFRLRTGYVDVQARDLDEALALIDESCRARVPRSVALIGNAAEVFAEIQRRGVRPDCVTDQTSAHDPVNGYLPRGWSIAEWEARRESDPDGVAAAAKRSMAEQVRVMLAFHRAGVPTVDYGNNIRQMALEEGVADAFAFPGFVPAYIRPLFCRGVGPFRWCALSGDPEDIYRTDAKVKQLLPDNAHLHRWLDMARDKIRFQGLPARICWVGLGDRHRLGLAFNAMVRSGELKAPIVIGRDHLDSGSVASPNRETEAMRDGSDAVSDWPLLNALLNTASGATWVSLHHGGGVGMGFSQHAGMVIVCDGSEAADRRLERVLWNDPATGVMRHADAGYPEAIACAREQGLVLPSLG</sequence>
<keyword id="KW-0963">Cytoplasm</keyword>
<keyword id="KW-0369">Histidine metabolism</keyword>
<keyword id="KW-0456">Lyase</keyword>
<keyword id="KW-0520">NAD</keyword>
<keyword id="KW-1185">Reference proteome</keyword>
<protein>
    <recommendedName>
        <fullName evidence="1">Urocanate hydratase</fullName>
        <shortName evidence="1">Urocanase</shortName>
        <ecNumber evidence="1">4.2.1.49</ecNumber>
    </recommendedName>
    <alternativeName>
        <fullName evidence="1">Imidazolonepropionate hydrolase</fullName>
    </alternativeName>
</protein>
<gene>
    <name evidence="1" type="primary">hutU</name>
    <name type="ordered locus">Mnod_1036</name>
</gene>
<proteinExistence type="inferred from homology"/>
<reference key="1">
    <citation type="submission" date="2009-01" db="EMBL/GenBank/DDBJ databases">
        <title>Complete sequence of chromosome of Methylobacterium nodulans ORS 2060.</title>
        <authorList>
            <consortium name="US DOE Joint Genome Institute"/>
            <person name="Lucas S."/>
            <person name="Copeland A."/>
            <person name="Lapidus A."/>
            <person name="Glavina del Rio T."/>
            <person name="Dalin E."/>
            <person name="Tice H."/>
            <person name="Bruce D."/>
            <person name="Goodwin L."/>
            <person name="Pitluck S."/>
            <person name="Sims D."/>
            <person name="Brettin T."/>
            <person name="Detter J.C."/>
            <person name="Han C."/>
            <person name="Larimer F."/>
            <person name="Land M."/>
            <person name="Hauser L."/>
            <person name="Kyrpides N."/>
            <person name="Ivanova N."/>
            <person name="Marx C.J."/>
            <person name="Richardson P."/>
        </authorList>
    </citation>
    <scope>NUCLEOTIDE SEQUENCE [LARGE SCALE GENOMIC DNA]</scope>
    <source>
        <strain>LMG 21967 / CNCM I-2342 / ORS 2060</strain>
    </source>
</reference>
<evidence type="ECO:0000255" key="1">
    <source>
        <dbReference type="HAMAP-Rule" id="MF_00577"/>
    </source>
</evidence>